<sequence>MRKPELAAAIAEKADLTKEQANRVLNALLDEITGALNRKDSVTLVGFGTFLQRHRGARTGKNPQTGQPVKIKASNTVAFKPGKALRDAVN</sequence>
<dbReference type="EMBL" id="AE004091">
    <property type="protein sequence ID" value="AAG08733.1"/>
    <property type="molecule type" value="Genomic_DNA"/>
</dbReference>
<dbReference type="PIR" id="F82976">
    <property type="entry name" value="F82976"/>
</dbReference>
<dbReference type="RefSeq" id="NP_254035.1">
    <property type="nucleotide sequence ID" value="NC_002516.2"/>
</dbReference>
<dbReference type="RefSeq" id="WP_003096630.1">
    <property type="nucleotide sequence ID" value="NC_002516.2"/>
</dbReference>
<dbReference type="SMR" id="Q9HTL0"/>
<dbReference type="STRING" id="208964.PA5348"/>
<dbReference type="PaxDb" id="208964-PA5348"/>
<dbReference type="DNASU" id="879642"/>
<dbReference type="GeneID" id="879642"/>
<dbReference type="KEGG" id="pae:PA5348"/>
<dbReference type="PATRIC" id="fig|208964.12.peg.5604"/>
<dbReference type="PseudoCAP" id="PA5348"/>
<dbReference type="HOGENOM" id="CLU_105066_3_1_6"/>
<dbReference type="InParanoid" id="Q9HTL0"/>
<dbReference type="OrthoDB" id="9799835at2"/>
<dbReference type="PhylomeDB" id="Q9HTL0"/>
<dbReference type="BioCyc" id="PAER208964:G1FZ6-5470-MONOMER"/>
<dbReference type="Proteomes" id="UP000002438">
    <property type="component" value="Chromosome"/>
</dbReference>
<dbReference type="GO" id="GO:0005829">
    <property type="term" value="C:cytosol"/>
    <property type="evidence" value="ECO:0000318"/>
    <property type="project" value="GO_Central"/>
</dbReference>
<dbReference type="GO" id="GO:0003677">
    <property type="term" value="F:DNA binding"/>
    <property type="evidence" value="ECO:0000318"/>
    <property type="project" value="GO_Central"/>
</dbReference>
<dbReference type="GO" id="GO:0030527">
    <property type="term" value="F:structural constituent of chromatin"/>
    <property type="evidence" value="ECO:0007669"/>
    <property type="project" value="InterPro"/>
</dbReference>
<dbReference type="GO" id="GO:0030261">
    <property type="term" value="P:chromosome condensation"/>
    <property type="evidence" value="ECO:0007669"/>
    <property type="project" value="UniProtKB-KW"/>
</dbReference>
<dbReference type="CDD" id="cd13831">
    <property type="entry name" value="HU"/>
    <property type="match status" value="1"/>
</dbReference>
<dbReference type="FunFam" id="4.10.520.10:FF:000004">
    <property type="entry name" value="HU family DNA-binding protein"/>
    <property type="match status" value="1"/>
</dbReference>
<dbReference type="Gene3D" id="4.10.520.10">
    <property type="entry name" value="IHF-like DNA-binding proteins"/>
    <property type="match status" value="1"/>
</dbReference>
<dbReference type="InterPro" id="IPR000119">
    <property type="entry name" value="Hist_DNA-bd"/>
</dbReference>
<dbReference type="InterPro" id="IPR020816">
    <property type="entry name" value="Histone-like_DNA-bd_CS"/>
</dbReference>
<dbReference type="InterPro" id="IPR010992">
    <property type="entry name" value="IHF-like_DNA-bd_dom_sf"/>
</dbReference>
<dbReference type="PANTHER" id="PTHR33175">
    <property type="entry name" value="DNA-BINDING PROTEIN HU"/>
    <property type="match status" value="1"/>
</dbReference>
<dbReference type="PANTHER" id="PTHR33175:SF3">
    <property type="entry name" value="DNA-BINDING PROTEIN HU-BETA"/>
    <property type="match status" value="1"/>
</dbReference>
<dbReference type="Pfam" id="PF00216">
    <property type="entry name" value="Bac_DNA_binding"/>
    <property type="match status" value="1"/>
</dbReference>
<dbReference type="PRINTS" id="PR01727">
    <property type="entry name" value="DNABINDINGHU"/>
</dbReference>
<dbReference type="SMART" id="SM00411">
    <property type="entry name" value="BHL"/>
    <property type="match status" value="1"/>
</dbReference>
<dbReference type="SUPFAM" id="SSF47729">
    <property type="entry name" value="IHF-like DNA-binding proteins"/>
    <property type="match status" value="1"/>
</dbReference>
<dbReference type="PROSITE" id="PS00045">
    <property type="entry name" value="HISTONE_LIKE"/>
    <property type="match status" value="1"/>
</dbReference>
<organism>
    <name type="scientific">Pseudomonas aeruginosa (strain ATCC 15692 / DSM 22644 / CIP 104116 / JCM 14847 / LMG 12228 / 1C / PRS 101 / PAO1)</name>
    <dbReference type="NCBI Taxonomy" id="208964"/>
    <lineage>
        <taxon>Bacteria</taxon>
        <taxon>Pseudomonadati</taxon>
        <taxon>Pseudomonadota</taxon>
        <taxon>Gammaproteobacteria</taxon>
        <taxon>Pseudomonadales</taxon>
        <taxon>Pseudomonadaceae</taxon>
        <taxon>Pseudomonas</taxon>
    </lineage>
</organism>
<protein>
    <recommendedName>
        <fullName>DNA-binding protein HU-alpha</fullName>
    </recommendedName>
</protein>
<accession>Q9HTL0</accession>
<evidence type="ECO:0000250" key="1"/>
<evidence type="ECO:0000305" key="2"/>
<gene>
    <name type="primary">hupA</name>
    <name type="ordered locus">PA5348</name>
</gene>
<feature type="chain" id="PRO_0000104955" description="DNA-binding protein HU-alpha">
    <location>
        <begin position="1"/>
        <end position="90"/>
    </location>
</feature>
<keyword id="KW-0226">DNA condensation</keyword>
<keyword id="KW-0238">DNA-binding</keyword>
<keyword id="KW-1185">Reference proteome</keyword>
<comment type="function">
    <text evidence="1">Histone-like DNA-binding protein which is capable of wrapping DNA to stabilize it, and thus to prevent its denaturation under extreme environmental conditions.</text>
</comment>
<comment type="subunit">
    <text evidence="1">Heterodimer of an alpha and a beta chain.</text>
</comment>
<comment type="similarity">
    <text evidence="2">Belongs to the bacterial histone-like protein family.</text>
</comment>
<proteinExistence type="inferred from homology"/>
<name>DBHA_PSEAE</name>
<reference key="1">
    <citation type="journal article" date="2000" name="Nature">
        <title>Complete genome sequence of Pseudomonas aeruginosa PAO1, an opportunistic pathogen.</title>
        <authorList>
            <person name="Stover C.K."/>
            <person name="Pham X.-Q.T."/>
            <person name="Erwin A.L."/>
            <person name="Mizoguchi S.D."/>
            <person name="Warrener P."/>
            <person name="Hickey M.J."/>
            <person name="Brinkman F.S.L."/>
            <person name="Hufnagle W.O."/>
            <person name="Kowalik D.J."/>
            <person name="Lagrou M."/>
            <person name="Garber R.L."/>
            <person name="Goltry L."/>
            <person name="Tolentino E."/>
            <person name="Westbrock-Wadman S."/>
            <person name="Yuan Y."/>
            <person name="Brody L.L."/>
            <person name="Coulter S.N."/>
            <person name="Folger K.R."/>
            <person name="Kas A."/>
            <person name="Larbig K."/>
            <person name="Lim R.M."/>
            <person name="Smith K.A."/>
            <person name="Spencer D.H."/>
            <person name="Wong G.K.-S."/>
            <person name="Wu Z."/>
            <person name="Paulsen I.T."/>
            <person name="Reizer J."/>
            <person name="Saier M.H. Jr."/>
            <person name="Hancock R.E.W."/>
            <person name="Lory S."/>
            <person name="Olson M.V."/>
        </authorList>
    </citation>
    <scope>NUCLEOTIDE SEQUENCE [LARGE SCALE GENOMIC DNA]</scope>
    <source>
        <strain>ATCC 15692 / DSM 22644 / CIP 104116 / JCM 14847 / LMG 12228 / 1C / PRS 101 / PAO1</strain>
    </source>
</reference>